<protein>
    <recommendedName>
        <fullName evidence="1">Hydroxyacylglutathione hydrolase</fullName>
        <ecNumber evidence="1">3.1.2.6</ecNumber>
    </recommendedName>
    <alternativeName>
        <fullName evidence="1">Glyoxalase II</fullName>
        <shortName evidence="1">Glx II</shortName>
    </alternativeName>
</protein>
<evidence type="ECO:0000255" key="1">
    <source>
        <dbReference type="HAMAP-Rule" id="MF_01374"/>
    </source>
</evidence>
<sequence length="251" mass="28476">MNLNSIPAFDDNYIWVLNDEAGRCLIVDPGDAEPVLNAISANNWQPEAIFLTHHHHDHVGGVKELVEKFPQIVVYGPQETQDKGTTQVVKDGETAFVLGHEFSVIATPGHTLGHICYFSKPYLFCGDTLFSGGCGRLFEGTPSQMYQSLKKLSALPDDTLVCCAHEYTLSNMKFALSILPHDLSINDYYRKVKELRAKNQITLPVILKNERQINVFLRTEDIDLINVINEETLLQQPEERFAWLRSKKDRF</sequence>
<feature type="chain" id="PRO_0000309640" description="Hydroxyacylglutathione hydrolase">
    <location>
        <begin position="1"/>
        <end position="251"/>
    </location>
</feature>
<feature type="binding site" evidence="1">
    <location>
        <position position="53"/>
    </location>
    <ligand>
        <name>Zn(2+)</name>
        <dbReference type="ChEBI" id="CHEBI:29105"/>
        <label>1</label>
    </ligand>
</feature>
<feature type="binding site" evidence="1">
    <location>
        <position position="55"/>
    </location>
    <ligand>
        <name>Zn(2+)</name>
        <dbReference type="ChEBI" id="CHEBI:29105"/>
        <label>1</label>
    </ligand>
</feature>
<feature type="binding site" evidence="1">
    <location>
        <position position="57"/>
    </location>
    <ligand>
        <name>Zn(2+)</name>
        <dbReference type="ChEBI" id="CHEBI:29105"/>
        <label>2</label>
    </ligand>
</feature>
<feature type="binding site" evidence="1">
    <location>
        <position position="58"/>
    </location>
    <ligand>
        <name>Zn(2+)</name>
        <dbReference type="ChEBI" id="CHEBI:29105"/>
        <label>2</label>
    </ligand>
</feature>
<feature type="binding site" evidence="1">
    <location>
        <position position="110"/>
    </location>
    <ligand>
        <name>Zn(2+)</name>
        <dbReference type="ChEBI" id="CHEBI:29105"/>
        <label>1</label>
    </ligand>
</feature>
<feature type="binding site" evidence="1">
    <location>
        <position position="127"/>
    </location>
    <ligand>
        <name>Zn(2+)</name>
        <dbReference type="ChEBI" id="CHEBI:29105"/>
        <label>1</label>
    </ligand>
</feature>
<feature type="binding site" evidence="1">
    <location>
        <position position="127"/>
    </location>
    <ligand>
        <name>Zn(2+)</name>
        <dbReference type="ChEBI" id="CHEBI:29105"/>
        <label>2</label>
    </ligand>
</feature>
<feature type="binding site" evidence="1">
    <location>
        <position position="165"/>
    </location>
    <ligand>
        <name>Zn(2+)</name>
        <dbReference type="ChEBI" id="CHEBI:29105"/>
        <label>2</label>
    </ligand>
</feature>
<name>GLO2_ECOL5</name>
<proteinExistence type="inferred from homology"/>
<accession>Q0TLC5</accession>
<comment type="function">
    <text evidence="1">Thiolesterase that catalyzes the hydrolysis of S-D-lactoyl-glutathione to form glutathione and D-lactic acid.</text>
</comment>
<comment type="catalytic activity">
    <reaction evidence="1">
        <text>an S-(2-hydroxyacyl)glutathione + H2O = a 2-hydroxy carboxylate + glutathione + H(+)</text>
        <dbReference type="Rhea" id="RHEA:21864"/>
        <dbReference type="ChEBI" id="CHEBI:15377"/>
        <dbReference type="ChEBI" id="CHEBI:15378"/>
        <dbReference type="ChEBI" id="CHEBI:57925"/>
        <dbReference type="ChEBI" id="CHEBI:58896"/>
        <dbReference type="ChEBI" id="CHEBI:71261"/>
        <dbReference type="EC" id="3.1.2.6"/>
    </reaction>
</comment>
<comment type="cofactor">
    <cofactor evidence="1">
        <name>Zn(2+)</name>
        <dbReference type="ChEBI" id="CHEBI:29105"/>
    </cofactor>
    <text evidence="1">Binds 2 Zn(2+) ions per subunit.</text>
</comment>
<comment type="pathway">
    <text evidence="1">Secondary metabolite metabolism; methylglyoxal degradation; (R)-lactate from methylglyoxal: step 2/2.</text>
</comment>
<comment type="subunit">
    <text evidence="1">Monomer.</text>
</comment>
<comment type="similarity">
    <text evidence="1">Belongs to the metallo-beta-lactamase superfamily. Glyoxalase II family.</text>
</comment>
<dbReference type="EC" id="3.1.2.6" evidence="1"/>
<dbReference type="EMBL" id="CP000247">
    <property type="protein sequence ID" value="ABG68256.1"/>
    <property type="molecule type" value="Genomic_DNA"/>
</dbReference>
<dbReference type="RefSeq" id="WP_001052743.1">
    <property type="nucleotide sequence ID" value="NC_008253.1"/>
</dbReference>
<dbReference type="SMR" id="Q0TLC5"/>
<dbReference type="KEGG" id="ecp:ECP_0218"/>
<dbReference type="HOGENOM" id="CLU_030571_4_1_6"/>
<dbReference type="UniPathway" id="UPA00619">
    <property type="reaction ID" value="UER00676"/>
</dbReference>
<dbReference type="Proteomes" id="UP000009182">
    <property type="component" value="Chromosome"/>
</dbReference>
<dbReference type="GO" id="GO:0004416">
    <property type="term" value="F:hydroxyacylglutathione hydrolase activity"/>
    <property type="evidence" value="ECO:0007669"/>
    <property type="project" value="UniProtKB-UniRule"/>
</dbReference>
<dbReference type="GO" id="GO:0046872">
    <property type="term" value="F:metal ion binding"/>
    <property type="evidence" value="ECO:0007669"/>
    <property type="project" value="UniProtKB-KW"/>
</dbReference>
<dbReference type="GO" id="GO:0019243">
    <property type="term" value="P:methylglyoxal catabolic process to D-lactate via S-lactoyl-glutathione"/>
    <property type="evidence" value="ECO:0007669"/>
    <property type="project" value="InterPro"/>
</dbReference>
<dbReference type="CDD" id="cd07723">
    <property type="entry name" value="hydroxyacylglutathione_hydrolase_MBL-fold"/>
    <property type="match status" value="1"/>
</dbReference>
<dbReference type="FunFam" id="3.60.15.10:FF:000012">
    <property type="entry name" value="Hydroxyacylglutathione hydrolase"/>
    <property type="match status" value="1"/>
</dbReference>
<dbReference type="Gene3D" id="3.60.15.10">
    <property type="entry name" value="Ribonuclease Z/Hydroxyacylglutathione hydrolase-like"/>
    <property type="match status" value="1"/>
</dbReference>
<dbReference type="HAMAP" id="MF_01374">
    <property type="entry name" value="Glyoxalase_2"/>
    <property type="match status" value="1"/>
</dbReference>
<dbReference type="InterPro" id="IPR035680">
    <property type="entry name" value="Clx_II_MBL"/>
</dbReference>
<dbReference type="InterPro" id="IPR050110">
    <property type="entry name" value="Glyoxalase_II_hydrolase"/>
</dbReference>
<dbReference type="InterPro" id="IPR032282">
    <property type="entry name" value="HAGH_C"/>
</dbReference>
<dbReference type="InterPro" id="IPR017782">
    <property type="entry name" value="Hydroxyacylglutathione_Hdrlase"/>
</dbReference>
<dbReference type="InterPro" id="IPR001279">
    <property type="entry name" value="Metallo-B-lactamas"/>
</dbReference>
<dbReference type="InterPro" id="IPR036866">
    <property type="entry name" value="RibonucZ/Hydroxyglut_hydro"/>
</dbReference>
<dbReference type="NCBIfam" id="TIGR03413">
    <property type="entry name" value="GSH_gloB"/>
    <property type="match status" value="1"/>
</dbReference>
<dbReference type="NCBIfam" id="NF007597">
    <property type="entry name" value="PRK10241.1"/>
    <property type="match status" value="1"/>
</dbReference>
<dbReference type="PANTHER" id="PTHR43705">
    <property type="entry name" value="HYDROXYACYLGLUTATHIONE HYDROLASE"/>
    <property type="match status" value="1"/>
</dbReference>
<dbReference type="PANTHER" id="PTHR43705:SF1">
    <property type="entry name" value="HYDROXYACYLGLUTATHIONE HYDROLASE GLOB"/>
    <property type="match status" value="1"/>
</dbReference>
<dbReference type="Pfam" id="PF16123">
    <property type="entry name" value="HAGH_C"/>
    <property type="match status" value="1"/>
</dbReference>
<dbReference type="Pfam" id="PF00753">
    <property type="entry name" value="Lactamase_B"/>
    <property type="match status" value="1"/>
</dbReference>
<dbReference type="PIRSF" id="PIRSF005457">
    <property type="entry name" value="Glx"/>
    <property type="match status" value="1"/>
</dbReference>
<dbReference type="SMART" id="SM00849">
    <property type="entry name" value="Lactamase_B"/>
    <property type="match status" value="1"/>
</dbReference>
<dbReference type="SUPFAM" id="SSF56281">
    <property type="entry name" value="Metallo-hydrolase/oxidoreductase"/>
    <property type="match status" value="1"/>
</dbReference>
<gene>
    <name evidence="1" type="primary">gloB</name>
    <name type="ordered locus">ECP_0218</name>
</gene>
<keyword id="KW-0378">Hydrolase</keyword>
<keyword id="KW-0479">Metal-binding</keyword>
<keyword id="KW-0862">Zinc</keyword>
<organism>
    <name type="scientific">Escherichia coli O6:K15:H31 (strain 536 / UPEC)</name>
    <dbReference type="NCBI Taxonomy" id="362663"/>
    <lineage>
        <taxon>Bacteria</taxon>
        <taxon>Pseudomonadati</taxon>
        <taxon>Pseudomonadota</taxon>
        <taxon>Gammaproteobacteria</taxon>
        <taxon>Enterobacterales</taxon>
        <taxon>Enterobacteriaceae</taxon>
        <taxon>Escherichia</taxon>
    </lineage>
</organism>
<reference key="1">
    <citation type="journal article" date="2006" name="Mol. Microbiol.">
        <title>Role of pathogenicity island-associated integrases in the genome plasticity of uropathogenic Escherichia coli strain 536.</title>
        <authorList>
            <person name="Hochhut B."/>
            <person name="Wilde C."/>
            <person name="Balling G."/>
            <person name="Middendorf B."/>
            <person name="Dobrindt U."/>
            <person name="Brzuszkiewicz E."/>
            <person name="Gottschalk G."/>
            <person name="Carniel E."/>
            <person name="Hacker J."/>
        </authorList>
    </citation>
    <scope>NUCLEOTIDE SEQUENCE [LARGE SCALE GENOMIC DNA]</scope>
    <source>
        <strain>536 / UPEC</strain>
    </source>
</reference>